<gene>
    <name evidence="1" type="primary">nadE</name>
    <name type="ordered locus">LACR_1204</name>
</gene>
<dbReference type="EC" id="6.3.1.5" evidence="1"/>
<dbReference type="EMBL" id="CP000425">
    <property type="protein sequence ID" value="ABJ72736.1"/>
    <property type="molecule type" value="Genomic_DNA"/>
</dbReference>
<dbReference type="RefSeq" id="WP_011676109.1">
    <property type="nucleotide sequence ID" value="NC_008527.1"/>
</dbReference>
<dbReference type="SMR" id="Q02Z86"/>
<dbReference type="GeneID" id="61109348"/>
<dbReference type="KEGG" id="llc:LACR_1204"/>
<dbReference type="HOGENOM" id="CLU_059327_3_0_9"/>
<dbReference type="UniPathway" id="UPA00253">
    <property type="reaction ID" value="UER00333"/>
</dbReference>
<dbReference type="Proteomes" id="UP000000240">
    <property type="component" value="Chromosome"/>
</dbReference>
<dbReference type="GO" id="GO:0005737">
    <property type="term" value="C:cytoplasm"/>
    <property type="evidence" value="ECO:0007669"/>
    <property type="project" value="InterPro"/>
</dbReference>
<dbReference type="GO" id="GO:0005524">
    <property type="term" value="F:ATP binding"/>
    <property type="evidence" value="ECO:0007669"/>
    <property type="project" value="UniProtKB-UniRule"/>
</dbReference>
<dbReference type="GO" id="GO:0004359">
    <property type="term" value="F:glutaminase activity"/>
    <property type="evidence" value="ECO:0007669"/>
    <property type="project" value="InterPro"/>
</dbReference>
<dbReference type="GO" id="GO:0046872">
    <property type="term" value="F:metal ion binding"/>
    <property type="evidence" value="ECO:0007669"/>
    <property type="project" value="UniProtKB-KW"/>
</dbReference>
<dbReference type="GO" id="GO:0003952">
    <property type="term" value="F:NAD+ synthase (glutamine-hydrolyzing) activity"/>
    <property type="evidence" value="ECO:0007669"/>
    <property type="project" value="InterPro"/>
</dbReference>
<dbReference type="GO" id="GO:0008795">
    <property type="term" value="F:NAD+ synthase activity"/>
    <property type="evidence" value="ECO:0007669"/>
    <property type="project" value="UniProtKB-UniRule"/>
</dbReference>
<dbReference type="GO" id="GO:0009435">
    <property type="term" value="P:NAD biosynthetic process"/>
    <property type="evidence" value="ECO:0007669"/>
    <property type="project" value="UniProtKB-UniRule"/>
</dbReference>
<dbReference type="CDD" id="cd00553">
    <property type="entry name" value="NAD_synthase"/>
    <property type="match status" value="1"/>
</dbReference>
<dbReference type="FunFam" id="3.40.50.620:FF:000015">
    <property type="entry name" value="NH(3)-dependent NAD(+) synthetase"/>
    <property type="match status" value="1"/>
</dbReference>
<dbReference type="Gene3D" id="3.40.50.620">
    <property type="entry name" value="HUPs"/>
    <property type="match status" value="1"/>
</dbReference>
<dbReference type="HAMAP" id="MF_00193">
    <property type="entry name" value="NadE_ammonia_dep"/>
    <property type="match status" value="1"/>
</dbReference>
<dbReference type="InterPro" id="IPR022310">
    <property type="entry name" value="NAD/GMP_synthase"/>
</dbReference>
<dbReference type="InterPro" id="IPR003694">
    <property type="entry name" value="NAD_synthase"/>
</dbReference>
<dbReference type="InterPro" id="IPR022926">
    <property type="entry name" value="NH(3)-dep_NAD(+)_synth"/>
</dbReference>
<dbReference type="InterPro" id="IPR014729">
    <property type="entry name" value="Rossmann-like_a/b/a_fold"/>
</dbReference>
<dbReference type="NCBIfam" id="TIGR00552">
    <property type="entry name" value="nadE"/>
    <property type="match status" value="1"/>
</dbReference>
<dbReference type="NCBIfam" id="NF001979">
    <property type="entry name" value="PRK00768.1"/>
    <property type="match status" value="1"/>
</dbReference>
<dbReference type="PANTHER" id="PTHR23090">
    <property type="entry name" value="NH 3 /GLUTAMINE-DEPENDENT NAD + SYNTHETASE"/>
    <property type="match status" value="1"/>
</dbReference>
<dbReference type="PANTHER" id="PTHR23090:SF7">
    <property type="entry name" value="NH(3)-DEPENDENT NAD(+) SYNTHETASE"/>
    <property type="match status" value="1"/>
</dbReference>
<dbReference type="Pfam" id="PF02540">
    <property type="entry name" value="NAD_synthase"/>
    <property type="match status" value="1"/>
</dbReference>
<dbReference type="SUPFAM" id="SSF52402">
    <property type="entry name" value="Adenine nucleotide alpha hydrolases-like"/>
    <property type="match status" value="1"/>
</dbReference>
<feature type="chain" id="PRO_1000077567" description="NH(3)-dependent NAD(+) synthetase">
    <location>
        <begin position="1"/>
        <end position="274"/>
    </location>
</feature>
<feature type="binding site" evidence="1">
    <location>
        <begin position="46"/>
        <end position="53"/>
    </location>
    <ligand>
        <name>ATP</name>
        <dbReference type="ChEBI" id="CHEBI:30616"/>
    </ligand>
</feature>
<feature type="binding site" evidence="1">
    <location>
        <position position="52"/>
    </location>
    <ligand>
        <name>Mg(2+)</name>
        <dbReference type="ChEBI" id="CHEBI:18420"/>
    </ligand>
</feature>
<feature type="binding site" evidence="1">
    <location>
        <position position="140"/>
    </location>
    <ligand>
        <name>deamido-NAD(+)</name>
        <dbReference type="ChEBI" id="CHEBI:58437"/>
    </ligand>
</feature>
<feature type="binding site" evidence="1">
    <location>
        <position position="160"/>
    </location>
    <ligand>
        <name>ATP</name>
        <dbReference type="ChEBI" id="CHEBI:30616"/>
    </ligand>
</feature>
<feature type="binding site" evidence="1">
    <location>
        <position position="165"/>
    </location>
    <ligand>
        <name>Mg(2+)</name>
        <dbReference type="ChEBI" id="CHEBI:18420"/>
    </ligand>
</feature>
<feature type="binding site" evidence="1">
    <location>
        <position position="173"/>
    </location>
    <ligand>
        <name>deamido-NAD(+)</name>
        <dbReference type="ChEBI" id="CHEBI:58437"/>
    </ligand>
</feature>
<feature type="binding site" evidence="1">
    <location>
        <position position="180"/>
    </location>
    <ligand>
        <name>deamido-NAD(+)</name>
        <dbReference type="ChEBI" id="CHEBI:58437"/>
    </ligand>
</feature>
<feature type="binding site" evidence="1">
    <location>
        <position position="189"/>
    </location>
    <ligand>
        <name>ATP</name>
        <dbReference type="ChEBI" id="CHEBI:30616"/>
    </ligand>
</feature>
<feature type="binding site" evidence="1">
    <location>
        <position position="211"/>
    </location>
    <ligand>
        <name>ATP</name>
        <dbReference type="ChEBI" id="CHEBI:30616"/>
    </ligand>
</feature>
<feature type="binding site" evidence="1">
    <location>
        <begin position="260"/>
        <end position="261"/>
    </location>
    <ligand>
        <name>deamido-NAD(+)</name>
        <dbReference type="ChEBI" id="CHEBI:58437"/>
    </ligand>
</feature>
<proteinExistence type="inferred from homology"/>
<sequence length="274" mass="30163">MTLQEEIIKELGVKPIIDPKEEIRVSVDFLKDYLKKYPFIKSFVLGISGGQDSSLAGRLAQIAIEEMRQETADASYKFVAVRLPFGVQADEEDAQRALAFIKPDVSLAVNIKAAVEGQVAALNEAGVEVSDFNKGNIKARQRMITQYAVAGQYQGAVLGTDHAAENITGFFTKFGDGGADLLPLFRLNKRQGKALLAELGADPAIYEKVPTADLEEGKPGLADEIALGVTYNDIDDYTEGKVISEDAKAKIEAWWNKTQHKRHLPISIFDDFWK</sequence>
<accession>Q02Z86</accession>
<name>NADE_LACLS</name>
<comment type="function">
    <text evidence="1">Catalyzes the ATP-dependent amidation of deamido-NAD to form NAD. Uses ammonia as a nitrogen source.</text>
</comment>
<comment type="catalytic activity">
    <reaction evidence="1">
        <text>deamido-NAD(+) + NH4(+) + ATP = AMP + diphosphate + NAD(+) + H(+)</text>
        <dbReference type="Rhea" id="RHEA:21188"/>
        <dbReference type="ChEBI" id="CHEBI:15378"/>
        <dbReference type="ChEBI" id="CHEBI:28938"/>
        <dbReference type="ChEBI" id="CHEBI:30616"/>
        <dbReference type="ChEBI" id="CHEBI:33019"/>
        <dbReference type="ChEBI" id="CHEBI:57540"/>
        <dbReference type="ChEBI" id="CHEBI:58437"/>
        <dbReference type="ChEBI" id="CHEBI:456215"/>
        <dbReference type="EC" id="6.3.1.5"/>
    </reaction>
</comment>
<comment type="pathway">
    <text evidence="1">Cofactor biosynthesis; NAD(+) biosynthesis; NAD(+) from deamido-NAD(+) (ammonia route): step 1/1.</text>
</comment>
<comment type="subunit">
    <text evidence="1">Homodimer.</text>
</comment>
<comment type="similarity">
    <text evidence="1">Belongs to the NAD synthetase family.</text>
</comment>
<organism>
    <name type="scientific">Lactococcus lactis subsp. cremoris (strain SK11)</name>
    <dbReference type="NCBI Taxonomy" id="272622"/>
    <lineage>
        <taxon>Bacteria</taxon>
        <taxon>Bacillati</taxon>
        <taxon>Bacillota</taxon>
        <taxon>Bacilli</taxon>
        <taxon>Lactobacillales</taxon>
        <taxon>Streptococcaceae</taxon>
        <taxon>Lactococcus</taxon>
        <taxon>Lactococcus cremoris subsp. cremoris</taxon>
    </lineage>
</organism>
<keyword id="KW-0067">ATP-binding</keyword>
<keyword id="KW-0436">Ligase</keyword>
<keyword id="KW-0460">Magnesium</keyword>
<keyword id="KW-0479">Metal-binding</keyword>
<keyword id="KW-0520">NAD</keyword>
<keyword id="KW-0547">Nucleotide-binding</keyword>
<protein>
    <recommendedName>
        <fullName evidence="1">NH(3)-dependent NAD(+) synthetase</fullName>
        <ecNumber evidence="1">6.3.1.5</ecNumber>
    </recommendedName>
</protein>
<reference key="1">
    <citation type="journal article" date="2006" name="Proc. Natl. Acad. Sci. U.S.A.">
        <title>Comparative genomics of the lactic acid bacteria.</title>
        <authorList>
            <person name="Makarova K.S."/>
            <person name="Slesarev A."/>
            <person name="Wolf Y.I."/>
            <person name="Sorokin A."/>
            <person name="Mirkin B."/>
            <person name="Koonin E.V."/>
            <person name="Pavlov A."/>
            <person name="Pavlova N."/>
            <person name="Karamychev V."/>
            <person name="Polouchine N."/>
            <person name="Shakhova V."/>
            <person name="Grigoriev I."/>
            <person name="Lou Y."/>
            <person name="Rohksar D."/>
            <person name="Lucas S."/>
            <person name="Huang K."/>
            <person name="Goodstein D.M."/>
            <person name="Hawkins T."/>
            <person name="Plengvidhya V."/>
            <person name="Welker D."/>
            <person name="Hughes J."/>
            <person name="Goh Y."/>
            <person name="Benson A."/>
            <person name="Baldwin K."/>
            <person name="Lee J.-H."/>
            <person name="Diaz-Muniz I."/>
            <person name="Dosti B."/>
            <person name="Smeianov V."/>
            <person name="Wechter W."/>
            <person name="Barabote R."/>
            <person name="Lorca G."/>
            <person name="Altermann E."/>
            <person name="Barrangou R."/>
            <person name="Ganesan B."/>
            <person name="Xie Y."/>
            <person name="Rawsthorne H."/>
            <person name="Tamir D."/>
            <person name="Parker C."/>
            <person name="Breidt F."/>
            <person name="Broadbent J.R."/>
            <person name="Hutkins R."/>
            <person name="O'Sullivan D."/>
            <person name="Steele J."/>
            <person name="Unlu G."/>
            <person name="Saier M.H. Jr."/>
            <person name="Klaenhammer T."/>
            <person name="Richardson P."/>
            <person name="Kozyavkin S."/>
            <person name="Weimer B.C."/>
            <person name="Mills D.A."/>
        </authorList>
    </citation>
    <scope>NUCLEOTIDE SEQUENCE [LARGE SCALE GENOMIC DNA]</scope>
    <source>
        <strain>SK11</strain>
    </source>
</reference>
<evidence type="ECO:0000255" key="1">
    <source>
        <dbReference type="HAMAP-Rule" id="MF_00193"/>
    </source>
</evidence>